<gene>
    <name evidence="1" type="primary">scpB</name>
    <name type="ordered locus">ABC1816</name>
</gene>
<organism>
    <name type="scientific">Shouchella clausii (strain KSM-K16)</name>
    <name type="common">Alkalihalobacillus clausii</name>
    <dbReference type="NCBI Taxonomy" id="66692"/>
    <lineage>
        <taxon>Bacteria</taxon>
        <taxon>Bacillati</taxon>
        <taxon>Bacillota</taxon>
        <taxon>Bacilli</taxon>
        <taxon>Bacillales</taxon>
        <taxon>Bacillaceae</taxon>
        <taxon>Shouchella</taxon>
    </lineage>
</organism>
<accession>Q5WH04</accession>
<name>SCPB_SHOC1</name>
<evidence type="ECO:0000255" key="1">
    <source>
        <dbReference type="HAMAP-Rule" id="MF_01804"/>
    </source>
</evidence>
<proteinExistence type="inferred from homology"/>
<reference key="1">
    <citation type="submission" date="2003-10" db="EMBL/GenBank/DDBJ databases">
        <title>The complete genome sequence of the alkaliphilic Bacillus clausii KSM-K16.</title>
        <authorList>
            <person name="Takaki Y."/>
            <person name="Kageyama Y."/>
            <person name="Shimamura S."/>
            <person name="Suzuki H."/>
            <person name="Nishi S."/>
            <person name="Hatada Y."/>
            <person name="Kawai S."/>
            <person name="Ito S."/>
            <person name="Horikoshi K."/>
        </authorList>
    </citation>
    <scope>NUCLEOTIDE SEQUENCE [LARGE SCALE GENOMIC DNA]</scope>
    <source>
        <strain>KSM-K16</strain>
    </source>
</reference>
<comment type="function">
    <text evidence="1">Participates in chromosomal partition during cell division. May act via the formation of a condensin-like complex containing Smc and ScpA that pull DNA away from mid-cell into both cell halves.</text>
</comment>
<comment type="subunit">
    <text evidence="1">Homodimer. Homodimerization may be required to stabilize the binding of ScpA to the Smc head domains. Component of a cohesin-like complex composed of ScpA, ScpB and the Smc homodimer, in which ScpA and ScpB bind to the head domain of Smc. The presence of the three proteins is required for the association of the complex with DNA.</text>
</comment>
<comment type="subcellular location">
    <subcellularLocation>
        <location evidence="1">Cytoplasm</location>
    </subcellularLocation>
    <text evidence="1">Associated with two foci at the outer edges of the nucleoid region in young cells, and at four foci within both cell halves in older cells.</text>
</comment>
<comment type="similarity">
    <text evidence="1">Belongs to the ScpB family.</text>
</comment>
<sequence length="193" mass="21442">MSMQASKLAKIEGLLFVTGDDGISPTEMAELVEISEDEVIQLLEVLSEQMAKEERGIRLARLANRYRLTTKVEHADMYKKLASSPIHGGLSRAALETLAIVAYKQPITRAEIDEVRGVKSEKALQSLVSKLLIEECGRASGTGRAILYGTTPYFLDHFGLESLADLPDLKELDLNEEEQDETDLFFEKLNADL</sequence>
<dbReference type="EMBL" id="AP006627">
    <property type="protein sequence ID" value="BAD64351.1"/>
    <property type="molecule type" value="Genomic_DNA"/>
</dbReference>
<dbReference type="RefSeq" id="WP_011246659.1">
    <property type="nucleotide sequence ID" value="NC_006582.1"/>
</dbReference>
<dbReference type="SMR" id="Q5WH04"/>
<dbReference type="STRING" id="66692.ABC1816"/>
<dbReference type="GeneID" id="86925928"/>
<dbReference type="KEGG" id="bcl:ABC1816"/>
<dbReference type="eggNOG" id="COG1386">
    <property type="taxonomic scope" value="Bacteria"/>
</dbReference>
<dbReference type="HOGENOM" id="CLU_045647_5_3_9"/>
<dbReference type="OrthoDB" id="9806226at2"/>
<dbReference type="Proteomes" id="UP000001168">
    <property type="component" value="Chromosome"/>
</dbReference>
<dbReference type="GO" id="GO:0005737">
    <property type="term" value="C:cytoplasm"/>
    <property type="evidence" value="ECO:0007669"/>
    <property type="project" value="UniProtKB-SubCell"/>
</dbReference>
<dbReference type="GO" id="GO:0051301">
    <property type="term" value="P:cell division"/>
    <property type="evidence" value="ECO:0007669"/>
    <property type="project" value="UniProtKB-KW"/>
</dbReference>
<dbReference type="GO" id="GO:0051304">
    <property type="term" value="P:chromosome separation"/>
    <property type="evidence" value="ECO:0007669"/>
    <property type="project" value="InterPro"/>
</dbReference>
<dbReference type="GO" id="GO:0006260">
    <property type="term" value="P:DNA replication"/>
    <property type="evidence" value="ECO:0007669"/>
    <property type="project" value="UniProtKB-UniRule"/>
</dbReference>
<dbReference type="Gene3D" id="1.10.10.10">
    <property type="entry name" value="Winged helix-like DNA-binding domain superfamily/Winged helix DNA-binding domain"/>
    <property type="match status" value="2"/>
</dbReference>
<dbReference type="HAMAP" id="MF_01804">
    <property type="entry name" value="ScpB"/>
    <property type="match status" value="1"/>
</dbReference>
<dbReference type="InterPro" id="IPR005234">
    <property type="entry name" value="ScpB_csome_segregation"/>
</dbReference>
<dbReference type="InterPro" id="IPR036388">
    <property type="entry name" value="WH-like_DNA-bd_sf"/>
</dbReference>
<dbReference type="InterPro" id="IPR036390">
    <property type="entry name" value="WH_DNA-bd_sf"/>
</dbReference>
<dbReference type="NCBIfam" id="TIGR00281">
    <property type="entry name" value="SMC-Scp complex subunit ScpB"/>
    <property type="match status" value="1"/>
</dbReference>
<dbReference type="PANTHER" id="PTHR34298">
    <property type="entry name" value="SEGREGATION AND CONDENSATION PROTEIN B"/>
    <property type="match status" value="1"/>
</dbReference>
<dbReference type="PANTHER" id="PTHR34298:SF2">
    <property type="entry name" value="SEGREGATION AND CONDENSATION PROTEIN B"/>
    <property type="match status" value="1"/>
</dbReference>
<dbReference type="Pfam" id="PF04079">
    <property type="entry name" value="SMC_ScpB"/>
    <property type="match status" value="1"/>
</dbReference>
<dbReference type="PIRSF" id="PIRSF019345">
    <property type="entry name" value="ScpB"/>
    <property type="match status" value="1"/>
</dbReference>
<dbReference type="SUPFAM" id="SSF46785">
    <property type="entry name" value="Winged helix' DNA-binding domain"/>
    <property type="match status" value="2"/>
</dbReference>
<keyword id="KW-0131">Cell cycle</keyword>
<keyword id="KW-0132">Cell division</keyword>
<keyword id="KW-0159">Chromosome partition</keyword>
<keyword id="KW-0963">Cytoplasm</keyword>
<keyword id="KW-1185">Reference proteome</keyword>
<protein>
    <recommendedName>
        <fullName evidence="1">Segregation and condensation protein B</fullName>
    </recommendedName>
</protein>
<feature type="chain" id="PRO_0000273294" description="Segregation and condensation protein B">
    <location>
        <begin position="1"/>
        <end position="193"/>
    </location>
</feature>